<dbReference type="EC" id="2.7.4.9" evidence="1"/>
<dbReference type="EMBL" id="CP000855">
    <property type="protein sequence ID" value="ACJ15681.1"/>
    <property type="molecule type" value="Genomic_DNA"/>
</dbReference>
<dbReference type="RefSeq" id="WP_012571154.1">
    <property type="nucleotide sequence ID" value="NC_011529.1"/>
</dbReference>
<dbReference type="SMR" id="B6YSZ4"/>
<dbReference type="STRING" id="523850.TON_0196"/>
<dbReference type="GeneID" id="7017853"/>
<dbReference type="KEGG" id="ton:TON_0196"/>
<dbReference type="PATRIC" id="fig|523850.10.peg.198"/>
<dbReference type="eggNOG" id="arCOG01891">
    <property type="taxonomic scope" value="Archaea"/>
</dbReference>
<dbReference type="HOGENOM" id="CLU_049131_1_3_2"/>
<dbReference type="OrthoDB" id="43083at2157"/>
<dbReference type="Proteomes" id="UP000002727">
    <property type="component" value="Chromosome"/>
</dbReference>
<dbReference type="GO" id="GO:0005737">
    <property type="term" value="C:cytoplasm"/>
    <property type="evidence" value="ECO:0007669"/>
    <property type="project" value="TreeGrafter"/>
</dbReference>
<dbReference type="GO" id="GO:0005524">
    <property type="term" value="F:ATP binding"/>
    <property type="evidence" value="ECO:0007669"/>
    <property type="project" value="UniProtKB-UniRule"/>
</dbReference>
<dbReference type="GO" id="GO:0004798">
    <property type="term" value="F:dTMP kinase activity"/>
    <property type="evidence" value="ECO:0007669"/>
    <property type="project" value="UniProtKB-UniRule"/>
</dbReference>
<dbReference type="GO" id="GO:0006233">
    <property type="term" value="P:dTDP biosynthetic process"/>
    <property type="evidence" value="ECO:0007669"/>
    <property type="project" value="InterPro"/>
</dbReference>
<dbReference type="GO" id="GO:0006235">
    <property type="term" value="P:dTTP biosynthetic process"/>
    <property type="evidence" value="ECO:0007669"/>
    <property type="project" value="UniProtKB-UniRule"/>
</dbReference>
<dbReference type="GO" id="GO:0006227">
    <property type="term" value="P:dUDP biosynthetic process"/>
    <property type="evidence" value="ECO:0007669"/>
    <property type="project" value="TreeGrafter"/>
</dbReference>
<dbReference type="CDD" id="cd01672">
    <property type="entry name" value="TMPK"/>
    <property type="match status" value="1"/>
</dbReference>
<dbReference type="FunFam" id="3.40.50.300:FF:000225">
    <property type="entry name" value="Thymidylate kinase"/>
    <property type="match status" value="1"/>
</dbReference>
<dbReference type="Gene3D" id="3.40.50.300">
    <property type="entry name" value="P-loop containing nucleotide triphosphate hydrolases"/>
    <property type="match status" value="1"/>
</dbReference>
<dbReference type="HAMAP" id="MF_00165">
    <property type="entry name" value="Thymidylate_kinase"/>
    <property type="match status" value="1"/>
</dbReference>
<dbReference type="InterPro" id="IPR027417">
    <property type="entry name" value="P-loop_NTPase"/>
</dbReference>
<dbReference type="InterPro" id="IPR039430">
    <property type="entry name" value="Thymidylate_kin-like_dom"/>
</dbReference>
<dbReference type="InterPro" id="IPR018095">
    <property type="entry name" value="Thymidylate_kin_CS"/>
</dbReference>
<dbReference type="InterPro" id="IPR018094">
    <property type="entry name" value="Thymidylate_kinase"/>
</dbReference>
<dbReference type="NCBIfam" id="TIGR00041">
    <property type="entry name" value="DTMP_kinase"/>
    <property type="match status" value="1"/>
</dbReference>
<dbReference type="PANTHER" id="PTHR10344">
    <property type="entry name" value="THYMIDYLATE KINASE"/>
    <property type="match status" value="1"/>
</dbReference>
<dbReference type="PANTHER" id="PTHR10344:SF4">
    <property type="entry name" value="UMP-CMP KINASE 2, MITOCHONDRIAL"/>
    <property type="match status" value="1"/>
</dbReference>
<dbReference type="Pfam" id="PF02223">
    <property type="entry name" value="Thymidylate_kin"/>
    <property type="match status" value="1"/>
</dbReference>
<dbReference type="SUPFAM" id="SSF52540">
    <property type="entry name" value="P-loop containing nucleoside triphosphate hydrolases"/>
    <property type="match status" value="1"/>
</dbReference>
<dbReference type="PROSITE" id="PS01331">
    <property type="entry name" value="THYMIDYLATE_KINASE"/>
    <property type="match status" value="1"/>
</dbReference>
<comment type="catalytic activity">
    <reaction evidence="1">
        <text>dTMP + ATP = dTDP + ADP</text>
        <dbReference type="Rhea" id="RHEA:13517"/>
        <dbReference type="ChEBI" id="CHEBI:30616"/>
        <dbReference type="ChEBI" id="CHEBI:58369"/>
        <dbReference type="ChEBI" id="CHEBI:63528"/>
        <dbReference type="ChEBI" id="CHEBI:456216"/>
        <dbReference type="EC" id="2.7.4.9"/>
    </reaction>
</comment>
<comment type="similarity">
    <text evidence="1">Belongs to the thymidylate kinase family.</text>
</comment>
<evidence type="ECO:0000255" key="1">
    <source>
        <dbReference type="HAMAP-Rule" id="MF_00165"/>
    </source>
</evidence>
<sequence length="205" mass="23381">MFIVIEGIDGAGKSTQARLLAEWFKKKGYDVVLTKEPTDTAFGKLIRRLVLTGGKEGIIDGARISHEAEALLFAADRAEHVHKLIKPSLKTGKIVISDRYFYSSLAYQWARGLDLEWLIDLNRFAVRPDLVILLDLPVKESMKRINGRSIKTEFDKIAELQKKVRENYLKLAERFPEMRIVNALASVEDIHNDIVALVEHELLKR</sequence>
<reference key="1">
    <citation type="journal article" date="2008" name="J. Bacteriol.">
        <title>The complete genome sequence of Thermococcus onnurineus NA1 reveals a mixed heterotrophic and carboxydotrophic metabolism.</title>
        <authorList>
            <person name="Lee H.S."/>
            <person name="Kang S.G."/>
            <person name="Bae S.S."/>
            <person name="Lim J.K."/>
            <person name="Cho Y."/>
            <person name="Kim Y.J."/>
            <person name="Jeon J.H."/>
            <person name="Cha S.-S."/>
            <person name="Kwon K.K."/>
            <person name="Kim H.-T."/>
            <person name="Park C.-J."/>
            <person name="Lee H.-W."/>
            <person name="Kim S.I."/>
            <person name="Chun J."/>
            <person name="Colwell R.R."/>
            <person name="Kim S.-J."/>
            <person name="Lee J.-H."/>
        </authorList>
    </citation>
    <scope>NUCLEOTIDE SEQUENCE [LARGE SCALE GENOMIC DNA]</scope>
    <source>
        <strain>NA1</strain>
    </source>
</reference>
<organism>
    <name type="scientific">Thermococcus onnurineus (strain NA1)</name>
    <dbReference type="NCBI Taxonomy" id="523850"/>
    <lineage>
        <taxon>Archaea</taxon>
        <taxon>Methanobacteriati</taxon>
        <taxon>Methanobacteriota</taxon>
        <taxon>Thermococci</taxon>
        <taxon>Thermococcales</taxon>
        <taxon>Thermococcaceae</taxon>
        <taxon>Thermococcus</taxon>
    </lineage>
</organism>
<keyword id="KW-0067">ATP-binding</keyword>
<keyword id="KW-0418">Kinase</keyword>
<keyword id="KW-0545">Nucleotide biosynthesis</keyword>
<keyword id="KW-0547">Nucleotide-binding</keyword>
<keyword id="KW-0808">Transferase</keyword>
<accession>B6YSZ4</accession>
<name>KTHY_THEON</name>
<gene>
    <name evidence="1" type="primary">tmk</name>
    <name type="ordered locus">TON_0196</name>
</gene>
<proteinExistence type="inferred from homology"/>
<feature type="chain" id="PRO_1000097439" description="Probable thymidylate kinase">
    <location>
        <begin position="1"/>
        <end position="205"/>
    </location>
</feature>
<feature type="binding site" evidence="1">
    <location>
        <begin position="7"/>
        <end position="14"/>
    </location>
    <ligand>
        <name>ATP</name>
        <dbReference type="ChEBI" id="CHEBI:30616"/>
    </ligand>
</feature>
<protein>
    <recommendedName>
        <fullName evidence="1">Probable thymidylate kinase</fullName>
        <ecNumber evidence="1">2.7.4.9</ecNumber>
    </recommendedName>
    <alternativeName>
        <fullName evidence="1">dTMP kinase</fullName>
    </alternativeName>
</protein>